<name>IHFB_SALG2</name>
<organism>
    <name type="scientific">Salmonella gallinarum (strain 287/91 / NCTC 13346)</name>
    <dbReference type="NCBI Taxonomy" id="550538"/>
    <lineage>
        <taxon>Bacteria</taxon>
        <taxon>Pseudomonadati</taxon>
        <taxon>Pseudomonadota</taxon>
        <taxon>Gammaproteobacteria</taxon>
        <taxon>Enterobacterales</taxon>
        <taxon>Enterobacteriaceae</taxon>
        <taxon>Salmonella</taxon>
    </lineage>
</organism>
<evidence type="ECO:0000255" key="1">
    <source>
        <dbReference type="HAMAP-Rule" id="MF_00381"/>
    </source>
</evidence>
<protein>
    <recommendedName>
        <fullName evidence="1">Integration host factor subunit beta</fullName>
        <shortName evidence="1">IHF-beta</shortName>
    </recommendedName>
</protein>
<sequence length="94" mass="10621">MTKSELIERLATQQSHIPAKAVEDAVKEMLEHMASTLAQGERIEIRGFGSFSLHYRAPRTGRNPKTGDKVELEGKYVPHFKPGKELRDRANIYG</sequence>
<accession>B5R8J9</accession>
<comment type="function">
    <text evidence="1">This protein is one of the two subunits of integration host factor, a specific DNA-binding protein that functions in genetic recombination as well as in transcriptional and translational control.</text>
</comment>
<comment type="subunit">
    <text evidence="1">Heterodimer of an alpha and a beta chain.</text>
</comment>
<comment type="similarity">
    <text evidence="1">Belongs to the bacterial histone-like protein family.</text>
</comment>
<reference key="1">
    <citation type="journal article" date="2008" name="Genome Res.">
        <title>Comparative genome analysis of Salmonella enteritidis PT4 and Salmonella gallinarum 287/91 provides insights into evolutionary and host adaptation pathways.</title>
        <authorList>
            <person name="Thomson N.R."/>
            <person name="Clayton D.J."/>
            <person name="Windhorst D."/>
            <person name="Vernikos G."/>
            <person name="Davidson S."/>
            <person name="Churcher C."/>
            <person name="Quail M.A."/>
            <person name="Stevens M."/>
            <person name="Jones M.A."/>
            <person name="Watson M."/>
            <person name="Barron A."/>
            <person name="Layton A."/>
            <person name="Pickard D."/>
            <person name="Kingsley R.A."/>
            <person name="Bignell A."/>
            <person name="Clark L."/>
            <person name="Harris B."/>
            <person name="Ormond D."/>
            <person name="Abdellah Z."/>
            <person name="Brooks K."/>
            <person name="Cherevach I."/>
            <person name="Chillingworth T."/>
            <person name="Woodward J."/>
            <person name="Norberczak H."/>
            <person name="Lord A."/>
            <person name="Arrowsmith C."/>
            <person name="Jagels K."/>
            <person name="Moule S."/>
            <person name="Mungall K."/>
            <person name="Saunders M."/>
            <person name="Whitehead S."/>
            <person name="Chabalgoity J.A."/>
            <person name="Maskell D."/>
            <person name="Humphreys T."/>
            <person name="Roberts M."/>
            <person name="Barrow P.A."/>
            <person name="Dougan G."/>
            <person name="Parkhill J."/>
        </authorList>
    </citation>
    <scope>NUCLEOTIDE SEQUENCE [LARGE SCALE GENOMIC DNA]</scope>
    <source>
        <strain>287/91 / NCTC 13346</strain>
    </source>
</reference>
<proteinExistence type="inferred from homology"/>
<dbReference type="EMBL" id="AM933173">
    <property type="protein sequence ID" value="CAR36814.1"/>
    <property type="molecule type" value="Genomic_DNA"/>
</dbReference>
<dbReference type="RefSeq" id="WP_000167332.1">
    <property type="nucleotide sequence ID" value="NC_011274.1"/>
</dbReference>
<dbReference type="SMR" id="B5R8J9"/>
<dbReference type="GeneID" id="84237116"/>
<dbReference type="KEGG" id="seg:SG0924"/>
<dbReference type="HOGENOM" id="CLU_105066_2_0_6"/>
<dbReference type="Proteomes" id="UP000008321">
    <property type="component" value="Chromosome"/>
</dbReference>
<dbReference type="GO" id="GO:0005694">
    <property type="term" value="C:chromosome"/>
    <property type="evidence" value="ECO:0007669"/>
    <property type="project" value="InterPro"/>
</dbReference>
<dbReference type="GO" id="GO:0005829">
    <property type="term" value="C:cytosol"/>
    <property type="evidence" value="ECO:0007669"/>
    <property type="project" value="TreeGrafter"/>
</dbReference>
<dbReference type="GO" id="GO:0003677">
    <property type="term" value="F:DNA binding"/>
    <property type="evidence" value="ECO:0007669"/>
    <property type="project" value="UniProtKB-UniRule"/>
</dbReference>
<dbReference type="GO" id="GO:0030527">
    <property type="term" value="F:structural constituent of chromatin"/>
    <property type="evidence" value="ECO:0007669"/>
    <property type="project" value="InterPro"/>
</dbReference>
<dbReference type="GO" id="GO:0006310">
    <property type="term" value="P:DNA recombination"/>
    <property type="evidence" value="ECO:0007669"/>
    <property type="project" value="UniProtKB-UniRule"/>
</dbReference>
<dbReference type="GO" id="GO:0006355">
    <property type="term" value="P:regulation of DNA-templated transcription"/>
    <property type="evidence" value="ECO:0007669"/>
    <property type="project" value="UniProtKB-UniRule"/>
</dbReference>
<dbReference type="GO" id="GO:0006417">
    <property type="term" value="P:regulation of translation"/>
    <property type="evidence" value="ECO:0007669"/>
    <property type="project" value="UniProtKB-UniRule"/>
</dbReference>
<dbReference type="CDD" id="cd13836">
    <property type="entry name" value="IHF_B"/>
    <property type="match status" value="1"/>
</dbReference>
<dbReference type="FunFam" id="4.10.520.10:FF:000003">
    <property type="entry name" value="Integration host factor subunit beta"/>
    <property type="match status" value="1"/>
</dbReference>
<dbReference type="Gene3D" id="4.10.520.10">
    <property type="entry name" value="IHF-like DNA-binding proteins"/>
    <property type="match status" value="1"/>
</dbReference>
<dbReference type="HAMAP" id="MF_00381">
    <property type="entry name" value="IHF_beta"/>
    <property type="match status" value="1"/>
</dbReference>
<dbReference type="InterPro" id="IPR000119">
    <property type="entry name" value="Hist_DNA-bd"/>
</dbReference>
<dbReference type="InterPro" id="IPR020816">
    <property type="entry name" value="Histone-like_DNA-bd_CS"/>
</dbReference>
<dbReference type="InterPro" id="IPR010992">
    <property type="entry name" value="IHF-like_DNA-bd_dom_sf"/>
</dbReference>
<dbReference type="InterPro" id="IPR005685">
    <property type="entry name" value="IHF_beta"/>
</dbReference>
<dbReference type="NCBIfam" id="TIGR00988">
    <property type="entry name" value="hip"/>
    <property type="match status" value="1"/>
</dbReference>
<dbReference type="NCBIfam" id="NF001222">
    <property type="entry name" value="PRK00199.1"/>
    <property type="match status" value="1"/>
</dbReference>
<dbReference type="PANTHER" id="PTHR33175">
    <property type="entry name" value="DNA-BINDING PROTEIN HU"/>
    <property type="match status" value="1"/>
</dbReference>
<dbReference type="PANTHER" id="PTHR33175:SF5">
    <property type="entry name" value="INTEGRATION HOST FACTOR SUBUNIT BETA"/>
    <property type="match status" value="1"/>
</dbReference>
<dbReference type="Pfam" id="PF00216">
    <property type="entry name" value="Bac_DNA_binding"/>
    <property type="match status" value="1"/>
</dbReference>
<dbReference type="PRINTS" id="PR01727">
    <property type="entry name" value="DNABINDINGHU"/>
</dbReference>
<dbReference type="SMART" id="SM00411">
    <property type="entry name" value="BHL"/>
    <property type="match status" value="1"/>
</dbReference>
<dbReference type="SUPFAM" id="SSF47729">
    <property type="entry name" value="IHF-like DNA-binding proteins"/>
    <property type="match status" value="1"/>
</dbReference>
<dbReference type="PROSITE" id="PS00045">
    <property type="entry name" value="HISTONE_LIKE"/>
    <property type="match status" value="1"/>
</dbReference>
<keyword id="KW-0233">DNA recombination</keyword>
<keyword id="KW-0238">DNA-binding</keyword>
<keyword id="KW-0804">Transcription</keyword>
<keyword id="KW-0805">Transcription regulation</keyword>
<keyword id="KW-0810">Translation regulation</keyword>
<gene>
    <name evidence="1" type="primary">ihfB</name>
    <name evidence="1" type="synonym">himD</name>
    <name type="ordered locus">SG0924</name>
</gene>
<feature type="chain" id="PRO_1000122238" description="Integration host factor subunit beta">
    <location>
        <begin position="1"/>
        <end position="94"/>
    </location>
</feature>